<reference key="1">
    <citation type="journal article" date="2008" name="J. Bacteriol.">
        <title>The complete genome sequence of Actinobacillus pleuropneumoniae L20 (serotype 5b).</title>
        <authorList>
            <person name="Foote S.J."/>
            <person name="Bosse J.T."/>
            <person name="Bouevitch A.B."/>
            <person name="Langford P.R."/>
            <person name="Young N.M."/>
            <person name="Nash J.H.E."/>
        </authorList>
    </citation>
    <scope>NUCLEOTIDE SEQUENCE [LARGE SCALE GENOMIC DNA]</scope>
    <source>
        <strain>L20</strain>
    </source>
</reference>
<sequence length="251" mass="27928">MTIQLINESSNTEKFQQICDKWRLVHDRSAILALVLTDERLELRKLDEPKLGAIAVNFVDGTMAHRRKFGGGRGEAVAKAVGIKGDYLPTIIDATAGLGRDAFVLASVGCKVLLVERNPIVAALLEDGLVRAYADPEIGAFMQERMILADVRNISLLDVAQQAADVVYLDPMYPHKQKSALVKKEMRVFQHLVGADLDSDNFFVPAKALARKRVVVKRPDYAPFLAEQKPDFSQTTKNHRFDVYLSHLKSA</sequence>
<organism>
    <name type="scientific">Actinobacillus pleuropneumoniae serotype 5b (strain L20)</name>
    <dbReference type="NCBI Taxonomy" id="416269"/>
    <lineage>
        <taxon>Bacteria</taxon>
        <taxon>Pseudomonadati</taxon>
        <taxon>Pseudomonadota</taxon>
        <taxon>Gammaproteobacteria</taxon>
        <taxon>Pasteurellales</taxon>
        <taxon>Pasteurellaceae</taxon>
        <taxon>Actinobacillus</taxon>
    </lineage>
</organism>
<protein>
    <recommendedName>
        <fullName evidence="1">Ribosomal RNA small subunit methyltransferase J</fullName>
        <ecNumber evidence="1">2.1.1.242</ecNumber>
    </recommendedName>
    <alternativeName>
        <fullName evidence="1">16S rRNA m2G1516 methyltransferase</fullName>
    </alternativeName>
    <alternativeName>
        <fullName evidence="1">rRNA (guanine-N(2)-)-methyltransferase</fullName>
    </alternativeName>
</protein>
<proteinExistence type="inferred from homology"/>
<gene>
    <name evidence="1" type="primary">rsmJ</name>
    <name type="ordered locus">APL_1871</name>
</gene>
<evidence type="ECO:0000255" key="1">
    <source>
        <dbReference type="HAMAP-Rule" id="MF_01523"/>
    </source>
</evidence>
<feature type="chain" id="PRO_0000292622" description="Ribosomal RNA small subunit methyltransferase J">
    <location>
        <begin position="1"/>
        <end position="251"/>
    </location>
</feature>
<feature type="binding site" evidence="1">
    <location>
        <begin position="100"/>
        <end position="101"/>
    </location>
    <ligand>
        <name>S-adenosyl-L-methionine</name>
        <dbReference type="ChEBI" id="CHEBI:59789"/>
    </ligand>
</feature>
<feature type="binding site" evidence="1">
    <location>
        <begin position="116"/>
        <end position="117"/>
    </location>
    <ligand>
        <name>S-adenosyl-L-methionine</name>
        <dbReference type="ChEBI" id="CHEBI:59789"/>
    </ligand>
</feature>
<feature type="binding site" evidence="1">
    <location>
        <position position="170"/>
    </location>
    <ligand>
        <name>S-adenosyl-L-methionine</name>
        <dbReference type="ChEBI" id="CHEBI:59789"/>
    </ligand>
</feature>
<dbReference type="EC" id="2.1.1.242" evidence="1"/>
<dbReference type="EMBL" id="CP000569">
    <property type="protein sequence ID" value="ABN74953.1"/>
    <property type="molecule type" value="Genomic_DNA"/>
</dbReference>
<dbReference type="RefSeq" id="WP_005618330.1">
    <property type="nucleotide sequence ID" value="NC_009053.1"/>
</dbReference>
<dbReference type="SMR" id="A3N3G7"/>
<dbReference type="STRING" id="416269.APL_1871"/>
<dbReference type="EnsemblBacteria" id="ABN74953">
    <property type="protein sequence ID" value="ABN74953"/>
    <property type="gene ID" value="APL_1871"/>
</dbReference>
<dbReference type="KEGG" id="apl:APL_1871"/>
<dbReference type="eggNOG" id="COG0742">
    <property type="taxonomic scope" value="Bacteria"/>
</dbReference>
<dbReference type="HOGENOM" id="CLU_076324_0_0_6"/>
<dbReference type="Proteomes" id="UP000001432">
    <property type="component" value="Chromosome"/>
</dbReference>
<dbReference type="GO" id="GO:0005737">
    <property type="term" value="C:cytoplasm"/>
    <property type="evidence" value="ECO:0007669"/>
    <property type="project" value="UniProtKB-SubCell"/>
</dbReference>
<dbReference type="GO" id="GO:0008990">
    <property type="term" value="F:rRNA (guanine-N2-)-methyltransferase activity"/>
    <property type="evidence" value="ECO:0007669"/>
    <property type="project" value="UniProtKB-UniRule"/>
</dbReference>
<dbReference type="CDD" id="cd02440">
    <property type="entry name" value="AdoMet_MTases"/>
    <property type="match status" value="1"/>
</dbReference>
<dbReference type="Gene3D" id="3.40.50.150">
    <property type="entry name" value="Vaccinia Virus protein VP39"/>
    <property type="match status" value="1"/>
</dbReference>
<dbReference type="Gene3D" id="3.40.1630.10">
    <property type="entry name" value="YhiQ-like domain"/>
    <property type="match status" value="1"/>
</dbReference>
<dbReference type="HAMAP" id="MF_01523">
    <property type="entry name" value="16SrRNA_methyltr_J"/>
    <property type="match status" value="1"/>
</dbReference>
<dbReference type="InterPro" id="IPR007536">
    <property type="entry name" value="16SrRNA_methylTrfase_J"/>
</dbReference>
<dbReference type="InterPro" id="IPR029063">
    <property type="entry name" value="SAM-dependent_MTases_sf"/>
</dbReference>
<dbReference type="PANTHER" id="PTHR36112">
    <property type="entry name" value="RIBOSOMAL RNA SMALL SUBUNIT METHYLTRANSFERASE J"/>
    <property type="match status" value="1"/>
</dbReference>
<dbReference type="PANTHER" id="PTHR36112:SF1">
    <property type="entry name" value="RIBOSOMAL RNA SMALL SUBUNIT METHYLTRANSFERASE J"/>
    <property type="match status" value="1"/>
</dbReference>
<dbReference type="Pfam" id="PF04445">
    <property type="entry name" value="SAM_MT"/>
    <property type="match status" value="1"/>
</dbReference>
<dbReference type="SUPFAM" id="SSF53335">
    <property type="entry name" value="S-adenosyl-L-methionine-dependent methyltransferases"/>
    <property type="match status" value="1"/>
</dbReference>
<keyword id="KW-0963">Cytoplasm</keyword>
<keyword id="KW-0489">Methyltransferase</keyword>
<keyword id="KW-1185">Reference proteome</keyword>
<keyword id="KW-0698">rRNA processing</keyword>
<keyword id="KW-0949">S-adenosyl-L-methionine</keyword>
<keyword id="KW-0808">Transferase</keyword>
<comment type="function">
    <text evidence="1">Specifically methylates the guanosine in position 1516 of 16S rRNA.</text>
</comment>
<comment type="catalytic activity">
    <reaction evidence="1">
        <text>guanosine(1516) in 16S rRNA + S-adenosyl-L-methionine = N(2)-methylguanosine(1516) in 16S rRNA + S-adenosyl-L-homocysteine + H(+)</text>
        <dbReference type="Rhea" id="RHEA:43220"/>
        <dbReference type="Rhea" id="RHEA-COMP:10412"/>
        <dbReference type="Rhea" id="RHEA-COMP:10413"/>
        <dbReference type="ChEBI" id="CHEBI:15378"/>
        <dbReference type="ChEBI" id="CHEBI:57856"/>
        <dbReference type="ChEBI" id="CHEBI:59789"/>
        <dbReference type="ChEBI" id="CHEBI:74269"/>
        <dbReference type="ChEBI" id="CHEBI:74481"/>
        <dbReference type="EC" id="2.1.1.242"/>
    </reaction>
</comment>
<comment type="subcellular location">
    <subcellularLocation>
        <location evidence="1">Cytoplasm</location>
    </subcellularLocation>
</comment>
<comment type="similarity">
    <text evidence="1">Belongs to the methyltransferase superfamily. RsmJ family.</text>
</comment>
<accession>A3N3G7</accession>
<name>RSMJ_ACTP2</name>